<reference key="1">
    <citation type="journal article" date="1997" name="J. Bacteriol.">
        <title>Evolutionary analysis of the hisCGABdFDEHI gene cluster from the archaeon Sulfolobus solfataricus P2.</title>
        <authorList>
            <person name="Charlebois R.L."/>
            <person name="Sensen C.W."/>
            <person name="Doolittle W.F."/>
            <person name="Brown J.R."/>
        </authorList>
    </citation>
    <scope>NUCLEOTIDE SEQUENCE [GENOMIC DNA]</scope>
    <source>
        <strain>ATCC 35092 / DSM 1617 / JCM 11322 / P2</strain>
    </source>
</reference>
<reference key="2">
    <citation type="journal article" date="2000" name="Genome">
        <title>Gene content and organization of a 281-kbp contig from the genome of the extremely thermophilic archaeon, Sulfolobus solfataricus P2.</title>
        <authorList>
            <person name="Charlebois R.L."/>
            <person name="Singh R.K."/>
            <person name="Chan-Weiher C.C.-Y."/>
            <person name="Allard G."/>
            <person name="Chow C."/>
            <person name="Confalonieri F."/>
            <person name="Curtis B."/>
            <person name="Duguet M."/>
            <person name="Erauso G."/>
            <person name="Faguy D."/>
            <person name="Gaasterland T."/>
            <person name="Garrett R.A."/>
            <person name="Gordon P."/>
            <person name="Jeffries A.C."/>
            <person name="Kozera C."/>
            <person name="Kushwaha N."/>
            <person name="Lafleur E."/>
            <person name="Medina N."/>
            <person name="Peng X."/>
            <person name="Penny S.L."/>
            <person name="She Q."/>
            <person name="St Jean A."/>
            <person name="van der Oost J."/>
            <person name="Young F."/>
            <person name="Zivanovic Y."/>
            <person name="Doolittle W.F."/>
            <person name="Ragan M.A."/>
            <person name="Sensen C.W."/>
        </authorList>
    </citation>
    <scope>NUCLEOTIDE SEQUENCE [LARGE SCALE GENOMIC DNA]</scope>
    <source>
        <strain>ATCC 35092 / DSM 1617 / JCM 11322 / P2</strain>
    </source>
</reference>
<reference key="3">
    <citation type="journal article" date="2001" name="Proc. Natl. Acad. Sci. U.S.A.">
        <title>The complete genome of the crenarchaeon Sulfolobus solfataricus P2.</title>
        <authorList>
            <person name="She Q."/>
            <person name="Singh R.K."/>
            <person name="Confalonieri F."/>
            <person name="Zivanovic Y."/>
            <person name="Allard G."/>
            <person name="Awayez M.J."/>
            <person name="Chan-Weiher C.C.-Y."/>
            <person name="Clausen I.G."/>
            <person name="Curtis B.A."/>
            <person name="De Moors A."/>
            <person name="Erauso G."/>
            <person name="Fletcher C."/>
            <person name="Gordon P.M.K."/>
            <person name="Heikamp-de Jong I."/>
            <person name="Jeffries A.C."/>
            <person name="Kozera C.J."/>
            <person name="Medina N."/>
            <person name="Peng X."/>
            <person name="Thi-Ngoc H.P."/>
            <person name="Redder P."/>
            <person name="Schenk M.E."/>
            <person name="Theriault C."/>
            <person name="Tolstrup N."/>
            <person name="Charlebois R.L."/>
            <person name="Doolittle W.F."/>
            <person name="Duguet M."/>
            <person name="Gaasterland T."/>
            <person name="Garrett R.A."/>
            <person name="Ragan M.A."/>
            <person name="Sensen C.W."/>
            <person name="Van der Oost J."/>
        </authorList>
    </citation>
    <scope>NUCLEOTIDE SEQUENCE [LARGE SCALE GENOMIC DNA]</scope>
    <source>
        <strain>ATCC 35092 / DSM 1617 / JCM 11322 / P2</strain>
    </source>
</reference>
<dbReference type="EC" id="4.2.1.19"/>
<dbReference type="EMBL" id="U82227">
    <property type="protein sequence ID" value="AAB63021.1"/>
    <property type="molecule type" value="Genomic_DNA"/>
</dbReference>
<dbReference type="EMBL" id="Y18930">
    <property type="protein sequence ID" value="CAB57704.1"/>
    <property type="molecule type" value="Genomic_DNA"/>
</dbReference>
<dbReference type="EMBL" id="AE006641">
    <property type="protein sequence ID" value="AAK40907.1"/>
    <property type="molecule type" value="Genomic_DNA"/>
</dbReference>
<dbReference type="PIR" id="D90206">
    <property type="entry name" value="D90206"/>
</dbReference>
<dbReference type="SMR" id="O33773"/>
<dbReference type="FunCoup" id="O33773">
    <property type="interactions" value="114"/>
</dbReference>
<dbReference type="STRING" id="273057.SSO0596"/>
<dbReference type="PaxDb" id="273057-SSO0596"/>
<dbReference type="EnsemblBacteria" id="AAK40907">
    <property type="protein sequence ID" value="AAK40907"/>
    <property type="gene ID" value="SSO0596"/>
</dbReference>
<dbReference type="KEGG" id="sso:SSO0596"/>
<dbReference type="PATRIC" id="fig|273057.12.peg.603"/>
<dbReference type="eggNOG" id="arCOG04398">
    <property type="taxonomic scope" value="Archaea"/>
</dbReference>
<dbReference type="HOGENOM" id="CLU_044308_3_0_2"/>
<dbReference type="InParanoid" id="O33773"/>
<dbReference type="PhylomeDB" id="O33773"/>
<dbReference type="UniPathway" id="UPA00031">
    <property type="reaction ID" value="UER00011"/>
</dbReference>
<dbReference type="Proteomes" id="UP000001974">
    <property type="component" value="Chromosome"/>
</dbReference>
<dbReference type="GO" id="GO:0005737">
    <property type="term" value="C:cytoplasm"/>
    <property type="evidence" value="ECO:0007669"/>
    <property type="project" value="UniProtKB-SubCell"/>
</dbReference>
<dbReference type="GO" id="GO:0004424">
    <property type="term" value="F:imidazoleglycerol-phosphate dehydratase activity"/>
    <property type="evidence" value="ECO:0000318"/>
    <property type="project" value="GO_Central"/>
</dbReference>
<dbReference type="GO" id="GO:0000105">
    <property type="term" value="P:L-histidine biosynthetic process"/>
    <property type="evidence" value="ECO:0000318"/>
    <property type="project" value="GO_Central"/>
</dbReference>
<dbReference type="CDD" id="cd07914">
    <property type="entry name" value="IGPD"/>
    <property type="match status" value="1"/>
</dbReference>
<dbReference type="FunFam" id="3.30.230.40:FF:000001">
    <property type="entry name" value="Imidazoleglycerol-phosphate dehydratase HisB"/>
    <property type="match status" value="1"/>
</dbReference>
<dbReference type="FunFam" id="3.30.230.40:FF:000003">
    <property type="entry name" value="Imidazoleglycerol-phosphate dehydratase HisB"/>
    <property type="match status" value="1"/>
</dbReference>
<dbReference type="Gene3D" id="3.30.230.40">
    <property type="entry name" value="Imidazole glycerol phosphate dehydratase, domain 1"/>
    <property type="match status" value="2"/>
</dbReference>
<dbReference type="HAMAP" id="MF_00076">
    <property type="entry name" value="HisB"/>
    <property type="match status" value="1"/>
</dbReference>
<dbReference type="InterPro" id="IPR038494">
    <property type="entry name" value="IGPD_sf"/>
</dbReference>
<dbReference type="InterPro" id="IPR000807">
    <property type="entry name" value="ImidazoleglycerolP_deHydtase"/>
</dbReference>
<dbReference type="InterPro" id="IPR020565">
    <property type="entry name" value="ImidazoleglycerP_deHydtase_CS"/>
</dbReference>
<dbReference type="InterPro" id="IPR020568">
    <property type="entry name" value="Ribosomal_Su5_D2-typ_SF"/>
</dbReference>
<dbReference type="NCBIfam" id="NF002114">
    <property type="entry name" value="PRK00951.2-4"/>
    <property type="match status" value="1"/>
</dbReference>
<dbReference type="NCBIfam" id="NF010121">
    <property type="entry name" value="PRK13598.1"/>
    <property type="match status" value="1"/>
</dbReference>
<dbReference type="PANTHER" id="PTHR23133:SF2">
    <property type="entry name" value="IMIDAZOLEGLYCEROL-PHOSPHATE DEHYDRATASE"/>
    <property type="match status" value="1"/>
</dbReference>
<dbReference type="PANTHER" id="PTHR23133">
    <property type="entry name" value="IMIDAZOLEGLYCEROL-PHOSPHATE DEHYDRATASE HIS7"/>
    <property type="match status" value="1"/>
</dbReference>
<dbReference type="Pfam" id="PF00475">
    <property type="entry name" value="IGPD"/>
    <property type="match status" value="1"/>
</dbReference>
<dbReference type="SUPFAM" id="SSF54211">
    <property type="entry name" value="Ribosomal protein S5 domain 2-like"/>
    <property type="match status" value="2"/>
</dbReference>
<dbReference type="PROSITE" id="PS00954">
    <property type="entry name" value="IGP_DEHYDRATASE_1"/>
    <property type="match status" value="1"/>
</dbReference>
<dbReference type="PROSITE" id="PS00955">
    <property type="entry name" value="IGP_DEHYDRATASE_2"/>
    <property type="match status" value="1"/>
</dbReference>
<proteinExistence type="inferred from homology"/>
<evidence type="ECO:0000250" key="1"/>
<evidence type="ECO:0000305" key="2"/>
<comment type="catalytic activity">
    <reaction>
        <text>D-erythro-1-(imidazol-4-yl)glycerol 3-phosphate = 3-(imidazol-4-yl)-2-oxopropyl phosphate + H2O</text>
        <dbReference type="Rhea" id="RHEA:11040"/>
        <dbReference type="ChEBI" id="CHEBI:15377"/>
        <dbReference type="ChEBI" id="CHEBI:57766"/>
        <dbReference type="ChEBI" id="CHEBI:58278"/>
        <dbReference type="EC" id="4.2.1.19"/>
    </reaction>
</comment>
<comment type="pathway">
    <text>Amino-acid biosynthesis; L-histidine biosynthesis; L-histidine from 5-phospho-alpha-D-ribose 1-diphosphate: step 6/9.</text>
</comment>
<comment type="subcellular location">
    <subcellularLocation>
        <location evidence="1">Cytoplasm</location>
    </subcellularLocation>
</comment>
<comment type="similarity">
    <text evidence="2">Belongs to the imidazoleglycerol-phosphate dehydratase family.</text>
</comment>
<accession>O33773</accession>
<feature type="chain" id="PRO_0000158197" description="Imidazoleglycerol-phosphate dehydratase">
    <location>
        <begin position="1"/>
        <end position="193"/>
    </location>
</feature>
<sequence length="193" mass="21437">MSRSANITRETKETKIEVLLDIDRKGEVKVSTPIPFFNHMLITLLTYMNSTAIVSATDKLPYDDHHIVEDVAITLGLAIKTALGDKRGIKRFSHQIIPMDDALVLVSLDISNRGMAFVNLNLKRSEIGGLATENVPHFFQSFAYNSGITLHISQLSGYNTHHIIEASFKALGLALYEATRIVDNEIRSTKGII</sequence>
<name>HIS7_SACS2</name>
<organism>
    <name type="scientific">Saccharolobus solfataricus (strain ATCC 35092 / DSM 1617 / JCM 11322 / P2)</name>
    <name type="common">Sulfolobus solfataricus</name>
    <dbReference type="NCBI Taxonomy" id="273057"/>
    <lineage>
        <taxon>Archaea</taxon>
        <taxon>Thermoproteota</taxon>
        <taxon>Thermoprotei</taxon>
        <taxon>Sulfolobales</taxon>
        <taxon>Sulfolobaceae</taxon>
        <taxon>Saccharolobus</taxon>
    </lineage>
</organism>
<keyword id="KW-0028">Amino-acid biosynthesis</keyword>
<keyword id="KW-0963">Cytoplasm</keyword>
<keyword id="KW-0368">Histidine biosynthesis</keyword>
<keyword id="KW-0456">Lyase</keyword>
<keyword id="KW-1185">Reference proteome</keyword>
<protein>
    <recommendedName>
        <fullName>Imidazoleglycerol-phosphate dehydratase</fullName>
        <shortName>IGPD</shortName>
        <ecNumber>4.2.1.19</ecNumber>
    </recommendedName>
</protein>
<gene>
    <name type="primary">hisB</name>
    <name type="ordered locus">SSO0596</name>
    <name type="ORF">C08_054</name>
</gene>